<organism>
    <name type="scientific">Prochlorococcus marinus (strain MIT 9303)</name>
    <dbReference type="NCBI Taxonomy" id="59922"/>
    <lineage>
        <taxon>Bacteria</taxon>
        <taxon>Bacillati</taxon>
        <taxon>Cyanobacteriota</taxon>
        <taxon>Cyanophyceae</taxon>
        <taxon>Synechococcales</taxon>
        <taxon>Prochlorococcaceae</taxon>
        <taxon>Prochlorococcus</taxon>
    </lineage>
</organism>
<name>MNMG_PROM3</name>
<evidence type="ECO:0000255" key="1">
    <source>
        <dbReference type="HAMAP-Rule" id="MF_00129"/>
    </source>
</evidence>
<keyword id="KW-0963">Cytoplasm</keyword>
<keyword id="KW-0274">FAD</keyword>
<keyword id="KW-0285">Flavoprotein</keyword>
<keyword id="KW-0520">NAD</keyword>
<keyword id="KW-0819">tRNA processing</keyword>
<sequence length="653" mass="71487">MPFSAPPTEHFDVIVVGGGHAGCEAALTAARLGLSTALFTLNLDRIAWQPCNPAVGGPAKSQLVHEVDALGGVIGRLADATALQKRVLNASRGPAVWALRAQTDKRLYSRQMLQLLQQTANLSLREAMVTGLEVKGDPSGGGEHWEPAQGHAAQITGVRTYFGSIYRAQAVVLTTGTFLGGQIWVGNQSMPAGRAGEQAAEGLTEALESLGFQTNRLKTGTPARVDRRSIALDQLEEQPSDAADRFFSFDPTTWVSGEQMSCHITRTTASTHQLIKENLELTPIYGGFLDSKGPRYCPSIEDKIVRFADKDSHQIFLEPEGRDTPEIYVQGFSTGLPERLQLDLLRTLPGLEQCIMLRPAYAVDYDYLPATQLSPSLQTKRVKGLFTAGQLNGTTGYEEAAAQGLVAGLNAARLVHGQEQVHFPREGSYIGTMIDDLVSKDLHEPYRVLTSRSEYRLILRGDNADRRLTPLGYQLGLIDARRWQLFQSKQTALEDEKQRLEKQRIKASDPAAPALEAKTGAKIKGSITLADLLRRPGVHSADLIEHGLVDPELALGVREGAEIDIKYSGYLQRQQQQIDQLKRQSQRRLPANLDYANISTLSKEAREKLTAVGPLNFAQASQIPGVSKADLTALLVWLELQKRRTLAASGHDR</sequence>
<reference key="1">
    <citation type="journal article" date="2007" name="PLoS Genet.">
        <title>Patterns and implications of gene gain and loss in the evolution of Prochlorococcus.</title>
        <authorList>
            <person name="Kettler G.C."/>
            <person name="Martiny A.C."/>
            <person name="Huang K."/>
            <person name="Zucker J."/>
            <person name="Coleman M.L."/>
            <person name="Rodrigue S."/>
            <person name="Chen F."/>
            <person name="Lapidus A."/>
            <person name="Ferriera S."/>
            <person name="Johnson J."/>
            <person name="Steglich C."/>
            <person name="Church G.M."/>
            <person name="Richardson P."/>
            <person name="Chisholm S.W."/>
        </authorList>
    </citation>
    <scope>NUCLEOTIDE SEQUENCE [LARGE SCALE GENOMIC DNA]</scope>
    <source>
        <strain>MIT 9303</strain>
    </source>
</reference>
<feature type="chain" id="PRO_1000016637" description="tRNA uridine 5-carboxymethylaminomethyl modification enzyme MnmG">
    <location>
        <begin position="1"/>
        <end position="653"/>
    </location>
</feature>
<feature type="binding site" evidence="1">
    <location>
        <begin position="17"/>
        <end position="22"/>
    </location>
    <ligand>
        <name>FAD</name>
        <dbReference type="ChEBI" id="CHEBI:57692"/>
    </ligand>
</feature>
<feature type="binding site" evidence="1">
    <location>
        <begin position="293"/>
        <end position="307"/>
    </location>
    <ligand>
        <name>NAD(+)</name>
        <dbReference type="ChEBI" id="CHEBI:57540"/>
    </ligand>
</feature>
<proteinExistence type="inferred from homology"/>
<accession>A2CDR8</accession>
<gene>
    <name evidence="1" type="primary">mnmG</name>
    <name evidence="1" type="synonym">gidA</name>
    <name type="ordered locus">P9303_28981</name>
</gene>
<comment type="function">
    <text evidence="1">NAD-binding protein involved in the addition of a carboxymethylaminomethyl (cmnm) group at the wobble position (U34) of certain tRNAs, forming tRNA-cmnm(5)s(2)U34.</text>
</comment>
<comment type="cofactor">
    <cofactor evidence="1">
        <name>FAD</name>
        <dbReference type="ChEBI" id="CHEBI:57692"/>
    </cofactor>
</comment>
<comment type="subunit">
    <text evidence="1">Homodimer. Heterotetramer of two MnmE and two MnmG subunits.</text>
</comment>
<comment type="subcellular location">
    <subcellularLocation>
        <location evidence="1">Cytoplasm</location>
    </subcellularLocation>
</comment>
<comment type="similarity">
    <text evidence="1">Belongs to the MnmG family.</text>
</comment>
<dbReference type="EMBL" id="CP000554">
    <property type="protein sequence ID" value="ABM79628.1"/>
    <property type="molecule type" value="Genomic_DNA"/>
</dbReference>
<dbReference type="RefSeq" id="WP_011827468.1">
    <property type="nucleotide sequence ID" value="NC_008820.1"/>
</dbReference>
<dbReference type="SMR" id="A2CDR8"/>
<dbReference type="STRING" id="59922.P9303_28981"/>
<dbReference type="KEGG" id="pmf:P9303_28981"/>
<dbReference type="HOGENOM" id="CLU_007831_2_2_3"/>
<dbReference type="BioCyc" id="PMAR59922:G1G80-2541-MONOMER"/>
<dbReference type="Proteomes" id="UP000002274">
    <property type="component" value="Chromosome"/>
</dbReference>
<dbReference type="GO" id="GO:0005737">
    <property type="term" value="C:cytoplasm"/>
    <property type="evidence" value="ECO:0007669"/>
    <property type="project" value="UniProtKB-SubCell"/>
</dbReference>
<dbReference type="GO" id="GO:0050660">
    <property type="term" value="F:flavin adenine dinucleotide binding"/>
    <property type="evidence" value="ECO:0007669"/>
    <property type="project" value="UniProtKB-UniRule"/>
</dbReference>
<dbReference type="GO" id="GO:0030488">
    <property type="term" value="P:tRNA methylation"/>
    <property type="evidence" value="ECO:0007669"/>
    <property type="project" value="TreeGrafter"/>
</dbReference>
<dbReference type="GO" id="GO:0002098">
    <property type="term" value="P:tRNA wobble uridine modification"/>
    <property type="evidence" value="ECO:0007669"/>
    <property type="project" value="InterPro"/>
</dbReference>
<dbReference type="FunFam" id="1.10.10.1800:FF:000001">
    <property type="entry name" value="tRNA uridine 5-carboxymethylaminomethyl modification enzyme MnmG"/>
    <property type="match status" value="1"/>
</dbReference>
<dbReference type="FunFam" id="1.10.150.570:FF:000001">
    <property type="entry name" value="tRNA uridine 5-carboxymethylaminomethyl modification enzyme MnmG"/>
    <property type="match status" value="1"/>
</dbReference>
<dbReference type="FunFam" id="3.50.50.60:FF:000094">
    <property type="entry name" value="tRNA uridine 5-carboxymethylaminomethyl modification enzyme MnmG"/>
    <property type="match status" value="1"/>
</dbReference>
<dbReference type="FunFam" id="3.50.50.60:FF:000119">
    <property type="entry name" value="tRNA uridine 5-carboxymethylaminomethyl modification enzyme MnmG"/>
    <property type="match status" value="1"/>
</dbReference>
<dbReference type="Gene3D" id="3.50.50.60">
    <property type="entry name" value="FAD/NAD(P)-binding domain"/>
    <property type="match status" value="2"/>
</dbReference>
<dbReference type="Gene3D" id="1.10.150.570">
    <property type="entry name" value="GidA associated domain, C-terminal subdomain"/>
    <property type="match status" value="1"/>
</dbReference>
<dbReference type="Gene3D" id="1.10.10.1800">
    <property type="entry name" value="tRNA uridine 5-carboxymethylaminomethyl modification enzyme MnmG/GidA"/>
    <property type="match status" value="1"/>
</dbReference>
<dbReference type="HAMAP" id="MF_00129">
    <property type="entry name" value="MnmG_GidA"/>
    <property type="match status" value="1"/>
</dbReference>
<dbReference type="InterPro" id="IPR036188">
    <property type="entry name" value="FAD/NAD-bd_sf"/>
</dbReference>
<dbReference type="InterPro" id="IPR049312">
    <property type="entry name" value="GIDA_C_N"/>
</dbReference>
<dbReference type="InterPro" id="IPR004416">
    <property type="entry name" value="MnmG"/>
</dbReference>
<dbReference type="InterPro" id="IPR002218">
    <property type="entry name" value="MnmG-rel"/>
</dbReference>
<dbReference type="InterPro" id="IPR020595">
    <property type="entry name" value="MnmG-rel_CS"/>
</dbReference>
<dbReference type="InterPro" id="IPR026904">
    <property type="entry name" value="MnmG_C"/>
</dbReference>
<dbReference type="InterPro" id="IPR047001">
    <property type="entry name" value="MnmG_C_subdom"/>
</dbReference>
<dbReference type="InterPro" id="IPR044920">
    <property type="entry name" value="MnmG_C_subdom_sf"/>
</dbReference>
<dbReference type="InterPro" id="IPR040131">
    <property type="entry name" value="MnmG_N"/>
</dbReference>
<dbReference type="NCBIfam" id="TIGR00136">
    <property type="entry name" value="mnmG_gidA"/>
    <property type="match status" value="1"/>
</dbReference>
<dbReference type="PANTHER" id="PTHR11806">
    <property type="entry name" value="GLUCOSE INHIBITED DIVISION PROTEIN A"/>
    <property type="match status" value="1"/>
</dbReference>
<dbReference type="PANTHER" id="PTHR11806:SF0">
    <property type="entry name" value="PROTEIN MTO1 HOMOLOG, MITOCHONDRIAL"/>
    <property type="match status" value="1"/>
</dbReference>
<dbReference type="Pfam" id="PF01134">
    <property type="entry name" value="GIDA"/>
    <property type="match status" value="1"/>
</dbReference>
<dbReference type="Pfam" id="PF21680">
    <property type="entry name" value="GIDA_C_1st"/>
    <property type="match status" value="1"/>
</dbReference>
<dbReference type="Pfam" id="PF13932">
    <property type="entry name" value="SAM_GIDA_C"/>
    <property type="match status" value="1"/>
</dbReference>
<dbReference type="SMART" id="SM01228">
    <property type="entry name" value="GIDA_assoc_3"/>
    <property type="match status" value="1"/>
</dbReference>
<dbReference type="SUPFAM" id="SSF51905">
    <property type="entry name" value="FAD/NAD(P)-binding domain"/>
    <property type="match status" value="1"/>
</dbReference>
<dbReference type="PROSITE" id="PS01280">
    <property type="entry name" value="GIDA_1"/>
    <property type="match status" value="1"/>
</dbReference>
<dbReference type="PROSITE" id="PS01281">
    <property type="entry name" value="GIDA_2"/>
    <property type="match status" value="1"/>
</dbReference>
<protein>
    <recommendedName>
        <fullName evidence="1">tRNA uridine 5-carboxymethylaminomethyl modification enzyme MnmG</fullName>
    </recommendedName>
    <alternativeName>
        <fullName evidence="1">Glucose-inhibited division protein A</fullName>
    </alternativeName>
</protein>